<comment type="function">
    <text evidence="1">This protein is one of the early assembly proteins of the 50S ribosomal subunit, although it is not seen to bind rRNA by itself. It is important during the early stages of 50S assembly.</text>
</comment>
<comment type="subunit">
    <text evidence="1">Part of the 50S ribosomal subunit.</text>
</comment>
<comment type="similarity">
    <text evidence="1">Belongs to the universal ribosomal protein uL13 family.</text>
</comment>
<reference key="1">
    <citation type="submission" date="2006-12" db="EMBL/GenBank/DDBJ databases">
        <title>Complete sequence of chromosome 1 of Nocardioides sp. JS614.</title>
        <authorList>
            <person name="Copeland A."/>
            <person name="Lucas S."/>
            <person name="Lapidus A."/>
            <person name="Barry K."/>
            <person name="Detter J.C."/>
            <person name="Glavina del Rio T."/>
            <person name="Hammon N."/>
            <person name="Israni S."/>
            <person name="Dalin E."/>
            <person name="Tice H."/>
            <person name="Pitluck S."/>
            <person name="Thompson L.S."/>
            <person name="Brettin T."/>
            <person name="Bruce D."/>
            <person name="Han C."/>
            <person name="Tapia R."/>
            <person name="Schmutz J."/>
            <person name="Larimer F."/>
            <person name="Land M."/>
            <person name="Hauser L."/>
            <person name="Kyrpides N."/>
            <person name="Kim E."/>
            <person name="Mattes T."/>
            <person name="Gossett J."/>
            <person name="Richardson P."/>
        </authorList>
    </citation>
    <scope>NUCLEOTIDE SEQUENCE [LARGE SCALE GENOMIC DNA]</scope>
    <source>
        <strain>ATCC BAA-499 / JS614</strain>
    </source>
</reference>
<keyword id="KW-1185">Reference proteome</keyword>
<keyword id="KW-0687">Ribonucleoprotein</keyword>
<keyword id="KW-0689">Ribosomal protein</keyword>
<organism>
    <name type="scientific">Nocardioides sp. (strain ATCC BAA-499 / JS614)</name>
    <dbReference type="NCBI Taxonomy" id="196162"/>
    <lineage>
        <taxon>Bacteria</taxon>
        <taxon>Bacillati</taxon>
        <taxon>Actinomycetota</taxon>
        <taxon>Actinomycetes</taxon>
        <taxon>Propionibacteriales</taxon>
        <taxon>Nocardioidaceae</taxon>
        <taxon>Nocardioides</taxon>
    </lineage>
</organism>
<proteinExistence type="inferred from homology"/>
<protein>
    <recommendedName>
        <fullName evidence="1">Large ribosomal subunit protein uL13</fullName>
    </recommendedName>
    <alternativeName>
        <fullName evidence="2">50S ribosomal protein L13</fullName>
    </alternativeName>
</protein>
<dbReference type="EMBL" id="CP000509">
    <property type="protein sequence ID" value="ABL80412.1"/>
    <property type="molecule type" value="Genomic_DNA"/>
</dbReference>
<dbReference type="RefSeq" id="WP_011754361.1">
    <property type="nucleotide sequence ID" value="NC_008699.1"/>
</dbReference>
<dbReference type="SMR" id="A1SF27"/>
<dbReference type="STRING" id="196162.Noca_0889"/>
<dbReference type="KEGG" id="nca:Noca_0889"/>
<dbReference type="eggNOG" id="COG0102">
    <property type="taxonomic scope" value="Bacteria"/>
</dbReference>
<dbReference type="HOGENOM" id="CLU_082184_2_2_11"/>
<dbReference type="OrthoDB" id="9801330at2"/>
<dbReference type="Proteomes" id="UP000000640">
    <property type="component" value="Chromosome"/>
</dbReference>
<dbReference type="GO" id="GO:0022625">
    <property type="term" value="C:cytosolic large ribosomal subunit"/>
    <property type="evidence" value="ECO:0007669"/>
    <property type="project" value="TreeGrafter"/>
</dbReference>
<dbReference type="GO" id="GO:0003729">
    <property type="term" value="F:mRNA binding"/>
    <property type="evidence" value="ECO:0007669"/>
    <property type="project" value="TreeGrafter"/>
</dbReference>
<dbReference type="GO" id="GO:0003735">
    <property type="term" value="F:structural constituent of ribosome"/>
    <property type="evidence" value="ECO:0007669"/>
    <property type="project" value="InterPro"/>
</dbReference>
<dbReference type="GO" id="GO:0017148">
    <property type="term" value="P:negative regulation of translation"/>
    <property type="evidence" value="ECO:0007669"/>
    <property type="project" value="TreeGrafter"/>
</dbReference>
<dbReference type="GO" id="GO:0006412">
    <property type="term" value="P:translation"/>
    <property type="evidence" value="ECO:0007669"/>
    <property type="project" value="UniProtKB-UniRule"/>
</dbReference>
<dbReference type="CDD" id="cd00392">
    <property type="entry name" value="Ribosomal_L13"/>
    <property type="match status" value="1"/>
</dbReference>
<dbReference type="FunFam" id="3.90.1180.10:FF:000001">
    <property type="entry name" value="50S ribosomal protein L13"/>
    <property type="match status" value="1"/>
</dbReference>
<dbReference type="Gene3D" id="3.90.1180.10">
    <property type="entry name" value="Ribosomal protein L13"/>
    <property type="match status" value="1"/>
</dbReference>
<dbReference type="HAMAP" id="MF_01366">
    <property type="entry name" value="Ribosomal_uL13"/>
    <property type="match status" value="1"/>
</dbReference>
<dbReference type="InterPro" id="IPR005822">
    <property type="entry name" value="Ribosomal_uL13"/>
</dbReference>
<dbReference type="InterPro" id="IPR005823">
    <property type="entry name" value="Ribosomal_uL13_bac-type"/>
</dbReference>
<dbReference type="InterPro" id="IPR036899">
    <property type="entry name" value="Ribosomal_uL13_sf"/>
</dbReference>
<dbReference type="NCBIfam" id="TIGR01066">
    <property type="entry name" value="rplM_bact"/>
    <property type="match status" value="1"/>
</dbReference>
<dbReference type="PANTHER" id="PTHR11545:SF2">
    <property type="entry name" value="LARGE RIBOSOMAL SUBUNIT PROTEIN UL13M"/>
    <property type="match status" value="1"/>
</dbReference>
<dbReference type="PANTHER" id="PTHR11545">
    <property type="entry name" value="RIBOSOMAL PROTEIN L13"/>
    <property type="match status" value="1"/>
</dbReference>
<dbReference type="Pfam" id="PF00572">
    <property type="entry name" value="Ribosomal_L13"/>
    <property type="match status" value="1"/>
</dbReference>
<dbReference type="PIRSF" id="PIRSF002181">
    <property type="entry name" value="Ribosomal_L13"/>
    <property type="match status" value="1"/>
</dbReference>
<dbReference type="SUPFAM" id="SSF52161">
    <property type="entry name" value="Ribosomal protein L13"/>
    <property type="match status" value="1"/>
</dbReference>
<accession>A1SF27</accession>
<feature type="chain" id="PRO_1000055425" description="Large ribosomal subunit protein uL13">
    <location>
        <begin position="1"/>
        <end position="147"/>
    </location>
</feature>
<name>RL13_NOCSJ</name>
<gene>
    <name evidence="1" type="primary">rplM</name>
    <name type="ordered locus">Noca_0889</name>
</gene>
<sequence length="147" mass="16224">MRTYSPKPGDIQREWLVIDATDVVLGRLAVQTANLLRGKHKAIFAPHVDTGDFVIIVNAEKVALSGDKATTKMAYRHSGYPGGLTATPIGEILEKDARKAIEKAVWGMLPKNKLGRQMLKKLKVYSGPNHPHQAQKATPFEIKQISQ</sequence>
<evidence type="ECO:0000255" key="1">
    <source>
        <dbReference type="HAMAP-Rule" id="MF_01366"/>
    </source>
</evidence>
<evidence type="ECO:0000305" key="2"/>